<reference key="1">
    <citation type="journal article" date="2005" name="Nat. Biotechnol.">
        <title>Complete genome sequence of the plant commensal Pseudomonas fluorescens Pf-5.</title>
        <authorList>
            <person name="Paulsen I.T."/>
            <person name="Press C.M."/>
            <person name="Ravel J."/>
            <person name="Kobayashi D.Y."/>
            <person name="Myers G.S.A."/>
            <person name="Mavrodi D.V."/>
            <person name="DeBoy R.T."/>
            <person name="Seshadri R."/>
            <person name="Ren Q."/>
            <person name="Madupu R."/>
            <person name="Dodson R.J."/>
            <person name="Durkin A.S."/>
            <person name="Brinkac L.M."/>
            <person name="Daugherty S.C."/>
            <person name="Sullivan S.A."/>
            <person name="Rosovitz M.J."/>
            <person name="Gwinn M.L."/>
            <person name="Zhou L."/>
            <person name="Schneider D.J."/>
            <person name="Cartinhour S.W."/>
            <person name="Nelson W.C."/>
            <person name="Weidman J."/>
            <person name="Watkins K."/>
            <person name="Tran K."/>
            <person name="Khouri H."/>
            <person name="Pierson E.A."/>
            <person name="Pierson L.S. III"/>
            <person name="Thomashow L.S."/>
            <person name="Loper J.E."/>
        </authorList>
    </citation>
    <scope>NUCLEOTIDE SEQUENCE [LARGE SCALE GENOMIC DNA]</scope>
    <source>
        <strain>ATCC BAA-477 / NRRL B-23932 / Pf-5</strain>
    </source>
</reference>
<accession>Q4KKL2</accession>
<dbReference type="EC" id="2.5.1.141" evidence="1"/>
<dbReference type="EMBL" id="CP000076">
    <property type="protein sequence ID" value="AAY95486.1"/>
    <property type="molecule type" value="Genomic_DNA"/>
</dbReference>
<dbReference type="RefSeq" id="WP_011058457.1">
    <property type="nucleotide sequence ID" value="NC_004129.6"/>
</dbReference>
<dbReference type="SMR" id="Q4KKL2"/>
<dbReference type="STRING" id="220664.PFL_0069"/>
<dbReference type="KEGG" id="pfl:PFL_0069"/>
<dbReference type="PATRIC" id="fig|220664.5.peg.72"/>
<dbReference type="eggNOG" id="COG0109">
    <property type="taxonomic scope" value="Bacteria"/>
</dbReference>
<dbReference type="HOGENOM" id="CLU_029631_0_2_6"/>
<dbReference type="UniPathway" id="UPA00834">
    <property type="reaction ID" value="UER00712"/>
</dbReference>
<dbReference type="Proteomes" id="UP000008540">
    <property type="component" value="Chromosome"/>
</dbReference>
<dbReference type="GO" id="GO:0005886">
    <property type="term" value="C:plasma membrane"/>
    <property type="evidence" value="ECO:0007669"/>
    <property type="project" value="UniProtKB-SubCell"/>
</dbReference>
<dbReference type="GO" id="GO:0008495">
    <property type="term" value="F:protoheme IX farnesyltransferase activity"/>
    <property type="evidence" value="ECO:0007669"/>
    <property type="project" value="UniProtKB-UniRule"/>
</dbReference>
<dbReference type="GO" id="GO:0048034">
    <property type="term" value="P:heme O biosynthetic process"/>
    <property type="evidence" value="ECO:0007669"/>
    <property type="project" value="UniProtKB-UniRule"/>
</dbReference>
<dbReference type="CDD" id="cd13957">
    <property type="entry name" value="PT_UbiA_Cox10"/>
    <property type="match status" value="1"/>
</dbReference>
<dbReference type="FunFam" id="1.10.357.140:FF:000001">
    <property type="entry name" value="Protoheme IX farnesyltransferase"/>
    <property type="match status" value="1"/>
</dbReference>
<dbReference type="Gene3D" id="1.10.357.140">
    <property type="entry name" value="UbiA prenyltransferase"/>
    <property type="match status" value="1"/>
</dbReference>
<dbReference type="HAMAP" id="MF_00154">
    <property type="entry name" value="CyoE_CtaB"/>
    <property type="match status" value="1"/>
</dbReference>
<dbReference type="InterPro" id="IPR006369">
    <property type="entry name" value="Protohaem_IX_farnesylTrfase"/>
</dbReference>
<dbReference type="InterPro" id="IPR000537">
    <property type="entry name" value="UbiA_prenyltransferase"/>
</dbReference>
<dbReference type="InterPro" id="IPR030470">
    <property type="entry name" value="UbiA_prenylTrfase_CS"/>
</dbReference>
<dbReference type="InterPro" id="IPR044878">
    <property type="entry name" value="UbiA_sf"/>
</dbReference>
<dbReference type="NCBIfam" id="TIGR01473">
    <property type="entry name" value="cyoE_ctaB"/>
    <property type="match status" value="1"/>
</dbReference>
<dbReference type="NCBIfam" id="NF003349">
    <property type="entry name" value="PRK04375.1-2"/>
    <property type="match status" value="1"/>
</dbReference>
<dbReference type="PANTHER" id="PTHR43448:SF7">
    <property type="entry name" value="4-HYDROXYBENZOATE SOLANESYLTRANSFERASE"/>
    <property type="match status" value="1"/>
</dbReference>
<dbReference type="PANTHER" id="PTHR43448">
    <property type="entry name" value="PROTOHEME IX FARNESYLTRANSFERASE, MITOCHONDRIAL"/>
    <property type="match status" value="1"/>
</dbReference>
<dbReference type="Pfam" id="PF01040">
    <property type="entry name" value="UbiA"/>
    <property type="match status" value="1"/>
</dbReference>
<dbReference type="PROSITE" id="PS00943">
    <property type="entry name" value="UBIA"/>
    <property type="match status" value="1"/>
</dbReference>
<keyword id="KW-0997">Cell inner membrane</keyword>
<keyword id="KW-1003">Cell membrane</keyword>
<keyword id="KW-0350">Heme biosynthesis</keyword>
<keyword id="KW-0472">Membrane</keyword>
<keyword id="KW-0808">Transferase</keyword>
<keyword id="KW-0812">Transmembrane</keyword>
<keyword id="KW-1133">Transmembrane helix</keyword>
<name>CYOE1_PSEF5</name>
<protein>
    <recommendedName>
        <fullName evidence="1">Protoheme IX farnesyltransferase 1</fullName>
        <ecNumber evidence="1">2.5.1.141</ecNumber>
    </recommendedName>
    <alternativeName>
        <fullName evidence="1">Heme B farnesyltransferase 1</fullName>
    </alternativeName>
    <alternativeName>
        <fullName evidence="1">Heme O synthase 1</fullName>
    </alternativeName>
</protein>
<evidence type="ECO:0000255" key="1">
    <source>
        <dbReference type="HAMAP-Rule" id="MF_00154"/>
    </source>
</evidence>
<proteinExistence type="inferred from homology"/>
<organism>
    <name type="scientific">Pseudomonas fluorescens (strain ATCC BAA-477 / NRRL B-23932 / Pf-5)</name>
    <dbReference type="NCBI Taxonomy" id="220664"/>
    <lineage>
        <taxon>Bacteria</taxon>
        <taxon>Pseudomonadati</taxon>
        <taxon>Pseudomonadota</taxon>
        <taxon>Gammaproteobacteria</taxon>
        <taxon>Pseudomonadales</taxon>
        <taxon>Pseudomonadaceae</taxon>
        <taxon>Pseudomonas</taxon>
    </lineage>
</organism>
<sequence>MATLISERQHPQAIWRDYLELTKPKVVVLMLITSLVGMFLATRAGVPWTVLVFGNLGIALCAGGAAAVNHVVDRRIDALMARTHKRPLAEGRVSPRAALAFALLLALAGQALLLTFTNPLTAWLTLASLLGYAVVYTGFLKRATPQNIVIGGLAGAAPPLLGWVAATGHMSAEPLLLVLIIFAWTPPHFWALAIHRKEEYAKADIPMLPVTHGEHYTKVHILLYTFALLAVSLLPYVIHMSGVLYLVCALALGGRFLQWAWVLYRGTRPHAAINTFKYSIYYLFLLFIALLVDHYLLLNL</sequence>
<gene>
    <name evidence="1" type="primary">cyoE1</name>
    <name type="ordered locus">PFL_0069</name>
</gene>
<feature type="chain" id="PRO_0000326923" description="Protoheme IX farnesyltransferase 1">
    <location>
        <begin position="1"/>
        <end position="300"/>
    </location>
</feature>
<feature type="transmembrane region" description="Helical" evidence="1">
    <location>
        <begin position="26"/>
        <end position="46"/>
    </location>
</feature>
<feature type="transmembrane region" description="Helical" evidence="1">
    <location>
        <begin position="48"/>
        <end position="68"/>
    </location>
</feature>
<feature type="transmembrane region" description="Helical" evidence="1">
    <location>
        <begin position="97"/>
        <end position="117"/>
    </location>
</feature>
<feature type="transmembrane region" description="Helical" evidence="1">
    <location>
        <begin position="120"/>
        <end position="140"/>
    </location>
</feature>
<feature type="transmembrane region" description="Helical" evidence="1">
    <location>
        <begin position="148"/>
        <end position="168"/>
    </location>
</feature>
<feature type="transmembrane region" description="Helical" evidence="1">
    <location>
        <begin position="174"/>
        <end position="194"/>
    </location>
</feature>
<feature type="transmembrane region" description="Helical" evidence="1">
    <location>
        <begin position="226"/>
        <end position="246"/>
    </location>
</feature>
<feature type="transmembrane region" description="Helical" evidence="1">
    <location>
        <begin position="280"/>
        <end position="300"/>
    </location>
</feature>
<comment type="function">
    <text evidence="1">Converts heme B (protoheme IX) to heme O by substitution of the vinyl group on carbon 2 of heme B porphyrin ring with a hydroxyethyl farnesyl side group.</text>
</comment>
<comment type="catalytic activity">
    <reaction evidence="1">
        <text>heme b + (2E,6E)-farnesyl diphosphate + H2O = Fe(II)-heme o + diphosphate</text>
        <dbReference type="Rhea" id="RHEA:28070"/>
        <dbReference type="ChEBI" id="CHEBI:15377"/>
        <dbReference type="ChEBI" id="CHEBI:33019"/>
        <dbReference type="ChEBI" id="CHEBI:60344"/>
        <dbReference type="ChEBI" id="CHEBI:60530"/>
        <dbReference type="ChEBI" id="CHEBI:175763"/>
        <dbReference type="EC" id="2.5.1.141"/>
    </reaction>
</comment>
<comment type="pathway">
    <text evidence="1">Porphyrin-containing compound metabolism; heme O biosynthesis; heme O from protoheme: step 1/1.</text>
</comment>
<comment type="subcellular location">
    <subcellularLocation>
        <location evidence="1">Cell inner membrane</location>
        <topology evidence="1">Multi-pass membrane protein</topology>
    </subcellularLocation>
</comment>
<comment type="miscellaneous">
    <text evidence="1">Carbon 2 of the heme B porphyrin ring is defined according to the Fischer nomenclature.</text>
</comment>
<comment type="similarity">
    <text evidence="1">Belongs to the UbiA prenyltransferase family. Protoheme IX farnesyltransferase subfamily.</text>
</comment>